<feature type="chain" id="PRO_0000229506" description="Isopentenyl-diphosphate delta-isomerase">
    <location>
        <begin position="1"/>
        <end position="362"/>
    </location>
</feature>
<feature type="binding site" evidence="1">
    <location>
        <begin position="5"/>
        <end position="6"/>
    </location>
    <ligand>
        <name>substrate</name>
    </ligand>
</feature>
<feature type="binding site" evidence="1">
    <location>
        <begin position="63"/>
        <end position="65"/>
    </location>
    <ligand>
        <name>FMN</name>
        <dbReference type="ChEBI" id="CHEBI:58210"/>
    </ligand>
</feature>
<feature type="binding site" evidence="1">
    <location>
        <position position="93"/>
    </location>
    <ligand>
        <name>FMN</name>
        <dbReference type="ChEBI" id="CHEBI:58210"/>
    </ligand>
</feature>
<feature type="binding site" evidence="1">
    <location>
        <position position="122"/>
    </location>
    <ligand>
        <name>FMN</name>
        <dbReference type="ChEBI" id="CHEBI:58210"/>
    </ligand>
</feature>
<feature type="binding site" evidence="1">
    <location>
        <position position="152"/>
    </location>
    <ligand>
        <name>substrate</name>
    </ligand>
</feature>
<feature type="binding site" evidence="1">
    <location>
        <position position="153"/>
    </location>
    <ligand>
        <name>Mg(2+)</name>
        <dbReference type="ChEBI" id="CHEBI:18420"/>
    </ligand>
</feature>
<feature type="binding site" evidence="1">
    <location>
        <position position="184"/>
    </location>
    <ligand>
        <name>FMN</name>
        <dbReference type="ChEBI" id="CHEBI:58210"/>
    </ligand>
</feature>
<feature type="binding site" evidence="1">
    <location>
        <position position="214"/>
    </location>
    <ligand>
        <name>FMN</name>
        <dbReference type="ChEBI" id="CHEBI:58210"/>
    </ligand>
</feature>
<feature type="binding site" evidence="1">
    <location>
        <begin position="259"/>
        <end position="261"/>
    </location>
    <ligand>
        <name>FMN</name>
        <dbReference type="ChEBI" id="CHEBI:58210"/>
    </ligand>
</feature>
<feature type="binding site" evidence="1">
    <location>
        <begin position="280"/>
        <end position="281"/>
    </location>
    <ligand>
        <name>FMN</name>
        <dbReference type="ChEBI" id="CHEBI:58210"/>
    </ligand>
</feature>
<proteinExistence type="inferred from homology"/>
<reference key="1">
    <citation type="journal article" date="2004" name="Proc. Natl. Acad. Sci. U.S.A.">
        <title>The complete genomic sequence of Nocardia farcinica IFM 10152.</title>
        <authorList>
            <person name="Ishikawa J."/>
            <person name="Yamashita A."/>
            <person name="Mikami Y."/>
            <person name="Hoshino Y."/>
            <person name="Kurita H."/>
            <person name="Hotta K."/>
            <person name="Shiba T."/>
            <person name="Hattori M."/>
        </authorList>
    </citation>
    <scope>NUCLEOTIDE SEQUENCE [LARGE SCALE GENOMIC DNA]</scope>
    <source>
        <strain>IFM 10152</strain>
    </source>
</reference>
<accession>Q5YXN4</accession>
<name>IDI2_NOCFA</name>
<sequence length="362" mass="38576">MSSNRKDDHVRHAVDQHRDRTPVNDFDAIGFQHHALAGIDAADVDLGVDIAGKRWHTPLFINAMTGGSAAATDINRGLAIAARETGLPVASGSLSAYFRDPGLAGSFRVLREENPHGVVIANVNATATLDQARRAVDLLAADALQIHLNAVQEIVMPEGDRSFRSWPRRIEHLAAGVPVPVIVKEVGFGLSRPTVAWLRDAGVAVADVGGRGGTNFARIENDRRPAADFSFLDTWGQSTPACLLDSAEVTGIALVASGGIRSPLDVAKALALGADATGVAGRFLATLLDRGAEGLIETIRAWLDQLRSIATVLGAATPADLRRCDLLITGEVAAFCRLRGIDAAAYAHRSHWWHPSERRSLL</sequence>
<protein>
    <recommendedName>
        <fullName evidence="1">Isopentenyl-diphosphate delta-isomerase</fullName>
        <shortName evidence="1">IPP isomerase</shortName>
        <ecNumber evidence="1">5.3.3.2</ecNumber>
    </recommendedName>
    <alternativeName>
        <fullName evidence="1">Isopentenyl diphosphate:dimethylallyl diphosphate isomerase</fullName>
    </alternativeName>
    <alternativeName>
        <fullName evidence="1">Isopentenyl pyrophosphate isomerase</fullName>
    </alternativeName>
    <alternativeName>
        <fullName evidence="1">Type 2 isopentenyl diphosphate isomerase</fullName>
        <shortName evidence="1">IDI-2</shortName>
    </alternativeName>
</protein>
<dbReference type="EC" id="5.3.3.2" evidence="1"/>
<dbReference type="EMBL" id="AP006618">
    <property type="protein sequence ID" value="BAD57057.1"/>
    <property type="molecule type" value="Genomic_DNA"/>
</dbReference>
<dbReference type="RefSeq" id="WP_011208742.1">
    <property type="nucleotide sequence ID" value="NC_006361.1"/>
</dbReference>
<dbReference type="SMR" id="Q5YXN4"/>
<dbReference type="STRING" id="247156.NFA_22100"/>
<dbReference type="GeneID" id="61132971"/>
<dbReference type="KEGG" id="nfa:NFA_22100"/>
<dbReference type="eggNOG" id="COG1304">
    <property type="taxonomic scope" value="Bacteria"/>
</dbReference>
<dbReference type="HOGENOM" id="CLU_065515_0_0_11"/>
<dbReference type="OrthoDB" id="9795032at2"/>
<dbReference type="Proteomes" id="UP000006820">
    <property type="component" value="Chromosome"/>
</dbReference>
<dbReference type="GO" id="GO:0005737">
    <property type="term" value="C:cytoplasm"/>
    <property type="evidence" value="ECO:0007669"/>
    <property type="project" value="UniProtKB-SubCell"/>
</dbReference>
<dbReference type="GO" id="GO:0010181">
    <property type="term" value="F:FMN binding"/>
    <property type="evidence" value="ECO:0007669"/>
    <property type="project" value="UniProtKB-UniRule"/>
</dbReference>
<dbReference type="GO" id="GO:0004452">
    <property type="term" value="F:isopentenyl-diphosphate delta-isomerase activity"/>
    <property type="evidence" value="ECO:0007669"/>
    <property type="project" value="UniProtKB-UniRule"/>
</dbReference>
<dbReference type="GO" id="GO:0000287">
    <property type="term" value="F:magnesium ion binding"/>
    <property type="evidence" value="ECO:0007669"/>
    <property type="project" value="UniProtKB-UniRule"/>
</dbReference>
<dbReference type="GO" id="GO:0070402">
    <property type="term" value="F:NADPH binding"/>
    <property type="evidence" value="ECO:0007669"/>
    <property type="project" value="UniProtKB-UniRule"/>
</dbReference>
<dbReference type="GO" id="GO:0016491">
    <property type="term" value="F:oxidoreductase activity"/>
    <property type="evidence" value="ECO:0007669"/>
    <property type="project" value="InterPro"/>
</dbReference>
<dbReference type="GO" id="GO:0008299">
    <property type="term" value="P:isoprenoid biosynthetic process"/>
    <property type="evidence" value="ECO:0007669"/>
    <property type="project" value="UniProtKB-UniRule"/>
</dbReference>
<dbReference type="CDD" id="cd02811">
    <property type="entry name" value="IDI-2_FMN"/>
    <property type="match status" value="1"/>
</dbReference>
<dbReference type="Gene3D" id="3.20.20.70">
    <property type="entry name" value="Aldolase class I"/>
    <property type="match status" value="1"/>
</dbReference>
<dbReference type="HAMAP" id="MF_00354">
    <property type="entry name" value="Idi_2"/>
    <property type="match status" value="1"/>
</dbReference>
<dbReference type="InterPro" id="IPR013785">
    <property type="entry name" value="Aldolase_TIM"/>
</dbReference>
<dbReference type="InterPro" id="IPR000262">
    <property type="entry name" value="FMN-dep_DH"/>
</dbReference>
<dbReference type="InterPro" id="IPR011179">
    <property type="entry name" value="IPdP_isomerase"/>
</dbReference>
<dbReference type="NCBIfam" id="TIGR02151">
    <property type="entry name" value="IPP_isom_2"/>
    <property type="match status" value="1"/>
</dbReference>
<dbReference type="PANTHER" id="PTHR43665">
    <property type="entry name" value="ISOPENTENYL-DIPHOSPHATE DELTA-ISOMERASE"/>
    <property type="match status" value="1"/>
</dbReference>
<dbReference type="PANTHER" id="PTHR43665:SF1">
    <property type="entry name" value="ISOPENTENYL-DIPHOSPHATE DELTA-ISOMERASE"/>
    <property type="match status" value="1"/>
</dbReference>
<dbReference type="Pfam" id="PF01070">
    <property type="entry name" value="FMN_dh"/>
    <property type="match status" value="1"/>
</dbReference>
<dbReference type="PIRSF" id="PIRSF003314">
    <property type="entry name" value="IPP_isomerase"/>
    <property type="match status" value="1"/>
</dbReference>
<dbReference type="SUPFAM" id="SSF51395">
    <property type="entry name" value="FMN-linked oxidoreductases"/>
    <property type="match status" value="1"/>
</dbReference>
<keyword id="KW-0963">Cytoplasm</keyword>
<keyword id="KW-0285">Flavoprotein</keyword>
<keyword id="KW-0288">FMN</keyword>
<keyword id="KW-0413">Isomerase</keyword>
<keyword id="KW-0414">Isoprene biosynthesis</keyword>
<keyword id="KW-0460">Magnesium</keyword>
<keyword id="KW-0479">Metal-binding</keyword>
<keyword id="KW-0521">NADP</keyword>
<keyword id="KW-1185">Reference proteome</keyword>
<evidence type="ECO:0000255" key="1">
    <source>
        <dbReference type="HAMAP-Rule" id="MF_00354"/>
    </source>
</evidence>
<gene>
    <name evidence="1" type="primary">fni</name>
    <name type="ordered locus">NFA_22100</name>
</gene>
<organism>
    <name type="scientific">Nocardia farcinica (strain IFM 10152)</name>
    <dbReference type="NCBI Taxonomy" id="247156"/>
    <lineage>
        <taxon>Bacteria</taxon>
        <taxon>Bacillati</taxon>
        <taxon>Actinomycetota</taxon>
        <taxon>Actinomycetes</taxon>
        <taxon>Mycobacteriales</taxon>
        <taxon>Nocardiaceae</taxon>
        <taxon>Nocardia</taxon>
    </lineage>
</organism>
<comment type="function">
    <text evidence="1">Involved in the biosynthesis of isoprenoids. Catalyzes the 1,3-allylic rearrangement of the homoallylic substrate isopentenyl (IPP) to its allylic isomer, dimethylallyl diphosphate (DMAPP).</text>
</comment>
<comment type="catalytic activity">
    <reaction evidence="1">
        <text>isopentenyl diphosphate = dimethylallyl diphosphate</text>
        <dbReference type="Rhea" id="RHEA:23284"/>
        <dbReference type="ChEBI" id="CHEBI:57623"/>
        <dbReference type="ChEBI" id="CHEBI:128769"/>
        <dbReference type="EC" id="5.3.3.2"/>
    </reaction>
</comment>
<comment type="cofactor">
    <cofactor evidence="1">
        <name>FMN</name>
        <dbReference type="ChEBI" id="CHEBI:58210"/>
    </cofactor>
</comment>
<comment type="cofactor">
    <cofactor evidence="1">
        <name>NADPH</name>
        <dbReference type="ChEBI" id="CHEBI:57783"/>
    </cofactor>
</comment>
<comment type="cofactor">
    <cofactor evidence="1">
        <name>Mg(2+)</name>
        <dbReference type="ChEBI" id="CHEBI:18420"/>
    </cofactor>
</comment>
<comment type="subunit">
    <text evidence="1">Homooctamer. Dimer of tetramers.</text>
</comment>
<comment type="subcellular location">
    <subcellularLocation>
        <location evidence="1">Cytoplasm</location>
    </subcellularLocation>
</comment>
<comment type="similarity">
    <text evidence="1">Belongs to the IPP isomerase type 2 family.</text>
</comment>